<organism>
    <name type="scientific">Nostoc punctiforme (strain ATCC 29133 / PCC 73102)</name>
    <dbReference type="NCBI Taxonomy" id="63737"/>
    <lineage>
        <taxon>Bacteria</taxon>
        <taxon>Bacillati</taxon>
        <taxon>Cyanobacteriota</taxon>
        <taxon>Cyanophyceae</taxon>
        <taxon>Nostocales</taxon>
        <taxon>Nostocaceae</taxon>
        <taxon>Nostoc</taxon>
    </lineage>
</organism>
<name>ISPD_NOSP7</name>
<reference key="1">
    <citation type="journal article" date="2013" name="Plant Physiol.">
        <title>A Nostoc punctiforme Sugar Transporter Necessary to Establish a Cyanobacterium-Plant Symbiosis.</title>
        <authorList>
            <person name="Ekman M."/>
            <person name="Picossi S."/>
            <person name="Campbell E.L."/>
            <person name="Meeks J.C."/>
            <person name="Flores E."/>
        </authorList>
    </citation>
    <scope>NUCLEOTIDE SEQUENCE [LARGE SCALE GENOMIC DNA]</scope>
    <source>
        <strain>ATCC 29133 / PCC 73102</strain>
    </source>
</reference>
<proteinExistence type="inferred from homology"/>
<comment type="function">
    <text evidence="1">Catalyzes the formation of 4-diphosphocytidyl-2-C-methyl-D-erythritol from CTP and 2-C-methyl-D-erythritol 4-phosphate (MEP).</text>
</comment>
<comment type="catalytic activity">
    <reaction evidence="1">
        <text>2-C-methyl-D-erythritol 4-phosphate + CTP + H(+) = 4-CDP-2-C-methyl-D-erythritol + diphosphate</text>
        <dbReference type="Rhea" id="RHEA:13429"/>
        <dbReference type="ChEBI" id="CHEBI:15378"/>
        <dbReference type="ChEBI" id="CHEBI:33019"/>
        <dbReference type="ChEBI" id="CHEBI:37563"/>
        <dbReference type="ChEBI" id="CHEBI:57823"/>
        <dbReference type="ChEBI" id="CHEBI:58262"/>
        <dbReference type="EC" id="2.7.7.60"/>
    </reaction>
</comment>
<comment type="pathway">
    <text evidence="1">Isoprenoid biosynthesis; isopentenyl diphosphate biosynthesis via DXP pathway; isopentenyl diphosphate from 1-deoxy-D-xylulose 5-phosphate: step 2/6.</text>
</comment>
<comment type="similarity">
    <text evidence="1">Belongs to the IspD/TarI cytidylyltransferase family. IspD subfamily.</text>
</comment>
<dbReference type="EC" id="2.7.7.60" evidence="1"/>
<dbReference type="EMBL" id="CP001037">
    <property type="protein sequence ID" value="ACC83363.1"/>
    <property type="molecule type" value="Genomic_DNA"/>
</dbReference>
<dbReference type="RefSeq" id="WP_012411317.1">
    <property type="nucleotide sequence ID" value="NC_010628.1"/>
</dbReference>
<dbReference type="SMR" id="B2J1D2"/>
<dbReference type="STRING" id="63737.Npun_F5020"/>
<dbReference type="EnsemblBacteria" id="ACC83363">
    <property type="protein sequence ID" value="ACC83363"/>
    <property type="gene ID" value="Npun_F5020"/>
</dbReference>
<dbReference type="KEGG" id="npu:Npun_F5020"/>
<dbReference type="eggNOG" id="COG1211">
    <property type="taxonomic scope" value="Bacteria"/>
</dbReference>
<dbReference type="HOGENOM" id="CLU_061281_1_0_3"/>
<dbReference type="OrthoDB" id="9806837at2"/>
<dbReference type="PhylomeDB" id="B2J1D2"/>
<dbReference type="UniPathway" id="UPA00056">
    <property type="reaction ID" value="UER00093"/>
</dbReference>
<dbReference type="Proteomes" id="UP000001191">
    <property type="component" value="Chromosome"/>
</dbReference>
<dbReference type="GO" id="GO:0050518">
    <property type="term" value="F:2-C-methyl-D-erythritol 4-phosphate cytidylyltransferase activity"/>
    <property type="evidence" value="ECO:0007669"/>
    <property type="project" value="UniProtKB-UniRule"/>
</dbReference>
<dbReference type="GO" id="GO:0019288">
    <property type="term" value="P:isopentenyl diphosphate biosynthetic process, methylerythritol 4-phosphate pathway"/>
    <property type="evidence" value="ECO:0007669"/>
    <property type="project" value="UniProtKB-UniRule"/>
</dbReference>
<dbReference type="CDD" id="cd02516">
    <property type="entry name" value="CDP-ME_synthetase"/>
    <property type="match status" value="1"/>
</dbReference>
<dbReference type="FunFam" id="3.90.550.10:FF:000003">
    <property type="entry name" value="2-C-methyl-D-erythritol 4-phosphate cytidylyltransferase"/>
    <property type="match status" value="1"/>
</dbReference>
<dbReference type="Gene3D" id="3.90.550.10">
    <property type="entry name" value="Spore Coat Polysaccharide Biosynthesis Protein SpsA, Chain A"/>
    <property type="match status" value="1"/>
</dbReference>
<dbReference type="HAMAP" id="MF_00108">
    <property type="entry name" value="IspD"/>
    <property type="match status" value="1"/>
</dbReference>
<dbReference type="InterPro" id="IPR001228">
    <property type="entry name" value="IspD"/>
</dbReference>
<dbReference type="InterPro" id="IPR034683">
    <property type="entry name" value="IspD/TarI"/>
</dbReference>
<dbReference type="InterPro" id="IPR050088">
    <property type="entry name" value="IspD/TarI_cytidylyltransf_bact"/>
</dbReference>
<dbReference type="InterPro" id="IPR018294">
    <property type="entry name" value="ISPD_synthase_CS"/>
</dbReference>
<dbReference type="InterPro" id="IPR029044">
    <property type="entry name" value="Nucleotide-diphossugar_trans"/>
</dbReference>
<dbReference type="NCBIfam" id="TIGR00453">
    <property type="entry name" value="ispD"/>
    <property type="match status" value="1"/>
</dbReference>
<dbReference type="PANTHER" id="PTHR32125">
    <property type="entry name" value="2-C-METHYL-D-ERYTHRITOL 4-PHOSPHATE CYTIDYLYLTRANSFERASE, CHLOROPLASTIC"/>
    <property type="match status" value="1"/>
</dbReference>
<dbReference type="PANTHER" id="PTHR32125:SF4">
    <property type="entry name" value="2-C-METHYL-D-ERYTHRITOL 4-PHOSPHATE CYTIDYLYLTRANSFERASE, CHLOROPLASTIC"/>
    <property type="match status" value="1"/>
</dbReference>
<dbReference type="Pfam" id="PF01128">
    <property type="entry name" value="IspD"/>
    <property type="match status" value="1"/>
</dbReference>
<dbReference type="SUPFAM" id="SSF53448">
    <property type="entry name" value="Nucleotide-diphospho-sugar transferases"/>
    <property type="match status" value="1"/>
</dbReference>
<dbReference type="PROSITE" id="PS01295">
    <property type="entry name" value="ISPD"/>
    <property type="match status" value="1"/>
</dbReference>
<sequence length="227" mass="24799">MYLLIPAAGIGKRMGSNRNKLLLKVRSQPIIAWTLLAAEAANTISWIGIISQPTDWPDFRAILADLKLTKPVELIQGGSTRQESVYNGLQALPLAAEQVLIHDGARCLATPDLFNSCAQAIRHCPGLIAGVPVKDTIKVVDEQGIIQETPDRQKLWAAQTPQGFDVKLLKQCHAEGVRQGWEVTDDAALFEKCGIEVRIVEGEETNLKVTTPQDLAIAEFILTTRGV</sequence>
<gene>
    <name evidence="1" type="primary">ispD</name>
    <name type="ordered locus">Npun_F5020</name>
</gene>
<evidence type="ECO:0000255" key="1">
    <source>
        <dbReference type="HAMAP-Rule" id="MF_00108"/>
    </source>
</evidence>
<protein>
    <recommendedName>
        <fullName evidence="1">2-C-methyl-D-erythritol 4-phosphate cytidylyltransferase</fullName>
        <ecNumber evidence="1">2.7.7.60</ecNumber>
    </recommendedName>
    <alternativeName>
        <fullName evidence="1">4-diphosphocytidyl-2C-methyl-D-erythritol synthase</fullName>
    </alternativeName>
    <alternativeName>
        <fullName evidence="1">MEP cytidylyltransferase</fullName>
        <shortName evidence="1">MCT</shortName>
    </alternativeName>
</protein>
<accession>B2J1D2</accession>
<feature type="chain" id="PRO_1000094335" description="2-C-methyl-D-erythritol 4-phosphate cytidylyltransferase">
    <location>
        <begin position="1"/>
        <end position="227"/>
    </location>
</feature>
<feature type="site" description="Transition state stabilizer" evidence="1">
    <location>
        <position position="13"/>
    </location>
</feature>
<feature type="site" description="Transition state stabilizer" evidence="1">
    <location>
        <position position="20"/>
    </location>
</feature>
<feature type="site" description="Positions MEP for the nucleophilic attack" evidence="1">
    <location>
        <position position="152"/>
    </location>
</feature>
<feature type="site" description="Positions MEP for the nucleophilic attack" evidence="1">
    <location>
        <position position="208"/>
    </location>
</feature>
<keyword id="KW-0414">Isoprene biosynthesis</keyword>
<keyword id="KW-0548">Nucleotidyltransferase</keyword>
<keyword id="KW-1185">Reference proteome</keyword>
<keyword id="KW-0808">Transferase</keyword>